<organism>
    <name type="scientific">Clostridium beijerinckii (strain ATCC 51743 / NCIMB 8052)</name>
    <name type="common">Clostridium acetobutylicum</name>
    <dbReference type="NCBI Taxonomy" id="290402"/>
    <lineage>
        <taxon>Bacteria</taxon>
        <taxon>Bacillati</taxon>
        <taxon>Bacillota</taxon>
        <taxon>Clostridia</taxon>
        <taxon>Eubacteriales</taxon>
        <taxon>Clostridiaceae</taxon>
        <taxon>Clostridium</taxon>
    </lineage>
</organism>
<dbReference type="EC" id="5.4.2.10" evidence="1"/>
<dbReference type="EMBL" id="CP000721">
    <property type="protein sequence ID" value="ABR32400.1"/>
    <property type="molecule type" value="Genomic_DNA"/>
</dbReference>
<dbReference type="RefSeq" id="WP_011967562.1">
    <property type="nucleotide sequence ID" value="NC_009617.1"/>
</dbReference>
<dbReference type="SMR" id="A6LPX0"/>
<dbReference type="KEGG" id="cbe:Cbei_0210"/>
<dbReference type="eggNOG" id="COG1109">
    <property type="taxonomic scope" value="Bacteria"/>
</dbReference>
<dbReference type="HOGENOM" id="CLU_016950_7_0_9"/>
<dbReference type="Proteomes" id="UP000000565">
    <property type="component" value="Chromosome"/>
</dbReference>
<dbReference type="GO" id="GO:0005829">
    <property type="term" value="C:cytosol"/>
    <property type="evidence" value="ECO:0007669"/>
    <property type="project" value="TreeGrafter"/>
</dbReference>
<dbReference type="GO" id="GO:0000287">
    <property type="term" value="F:magnesium ion binding"/>
    <property type="evidence" value="ECO:0007669"/>
    <property type="project" value="UniProtKB-UniRule"/>
</dbReference>
<dbReference type="GO" id="GO:0008966">
    <property type="term" value="F:phosphoglucosamine mutase activity"/>
    <property type="evidence" value="ECO:0007669"/>
    <property type="project" value="UniProtKB-UniRule"/>
</dbReference>
<dbReference type="GO" id="GO:0004615">
    <property type="term" value="F:phosphomannomutase activity"/>
    <property type="evidence" value="ECO:0007669"/>
    <property type="project" value="TreeGrafter"/>
</dbReference>
<dbReference type="GO" id="GO:0005975">
    <property type="term" value="P:carbohydrate metabolic process"/>
    <property type="evidence" value="ECO:0007669"/>
    <property type="project" value="InterPro"/>
</dbReference>
<dbReference type="GO" id="GO:0009252">
    <property type="term" value="P:peptidoglycan biosynthetic process"/>
    <property type="evidence" value="ECO:0007669"/>
    <property type="project" value="TreeGrafter"/>
</dbReference>
<dbReference type="GO" id="GO:0006048">
    <property type="term" value="P:UDP-N-acetylglucosamine biosynthetic process"/>
    <property type="evidence" value="ECO:0007669"/>
    <property type="project" value="TreeGrafter"/>
</dbReference>
<dbReference type="CDD" id="cd05802">
    <property type="entry name" value="GlmM"/>
    <property type="match status" value="1"/>
</dbReference>
<dbReference type="FunFam" id="3.30.310.50:FF:000001">
    <property type="entry name" value="Phosphoglucosamine mutase"/>
    <property type="match status" value="1"/>
</dbReference>
<dbReference type="FunFam" id="3.40.120.10:FF:000001">
    <property type="entry name" value="Phosphoglucosamine mutase"/>
    <property type="match status" value="1"/>
</dbReference>
<dbReference type="FunFam" id="3.40.120.10:FF:000003">
    <property type="entry name" value="Phosphoglucosamine mutase"/>
    <property type="match status" value="1"/>
</dbReference>
<dbReference type="Gene3D" id="3.40.120.10">
    <property type="entry name" value="Alpha-D-Glucose-1,6-Bisphosphate, subunit A, domain 3"/>
    <property type="match status" value="3"/>
</dbReference>
<dbReference type="Gene3D" id="3.30.310.50">
    <property type="entry name" value="Alpha-D-phosphohexomutase, C-terminal domain"/>
    <property type="match status" value="1"/>
</dbReference>
<dbReference type="HAMAP" id="MF_01554_B">
    <property type="entry name" value="GlmM_B"/>
    <property type="match status" value="1"/>
</dbReference>
<dbReference type="InterPro" id="IPR005844">
    <property type="entry name" value="A-D-PHexomutase_a/b/a-I"/>
</dbReference>
<dbReference type="InterPro" id="IPR016055">
    <property type="entry name" value="A-D-PHexomutase_a/b/a-I/II/III"/>
</dbReference>
<dbReference type="InterPro" id="IPR005845">
    <property type="entry name" value="A-D-PHexomutase_a/b/a-II"/>
</dbReference>
<dbReference type="InterPro" id="IPR005846">
    <property type="entry name" value="A-D-PHexomutase_a/b/a-III"/>
</dbReference>
<dbReference type="InterPro" id="IPR005843">
    <property type="entry name" value="A-D-PHexomutase_C"/>
</dbReference>
<dbReference type="InterPro" id="IPR036900">
    <property type="entry name" value="A-D-PHexomutase_C_sf"/>
</dbReference>
<dbReference type="InterPro" id="IPR016066">
    <property type="entry name" value="A-D-PHexomutase_CS"/>
</dbReference>
<dbReference type="InterPro" id="IPR005841">
    <property type="entry name" value="Alpha-D-phosphohexomutase_SF"/>
</dbReference>
<dbReference type="InterPro" id="IPR006352">
    <property type="entry name" value="GlmM_bact"/>
</dbReference>
<dbReference type="InterPro" id="IPR050060">
    <property type="entry name" value="Phosphoglucosamine_mutase"/>
</dbReference>
<dbReference type="NCBIfam" id="TIGR01455">
    <property type="entry name" value="glmM"/>
    <property type="match status" value="1"/>
</dbReference>
<dbReference type="NCBIfam" id="NF008139">
    <property type="entry name" value="PRK10887.1"/>
    <property type="match status" value="1"/>
</dbReference>
<dbReference type="PANTHER" id="PTHR42946:SF1">
    <property type="entry name" value="PHOSPHOGLUCOMUTASE (ALPHA-D-GLUCOSE-1,6-BISPHOSPHATE-DEPENDENT)"/>
    <property type="match status" value="1"/>
</dbReference>
<dbReference type="PANTHER" id="PTHR42946">
    <property type="entry name" value="PHOSPHOHEXOSE MUTASE"/>
    <property type="match status" value="1"/>
</dbReference>
<dbReference type="Pfam" id="PF02878">
    <property type="entry name" value="PGM_PMM_I"/>
    <property type="match status" value="1"/>
</dbReference>
<dbReference type="Pfam" id="PF02879">
    <property type="entry name" value="PGM_PMM_II"/>
    <property type="match status" value="1"/>
</dbReference>
<dbReference type="Pfam" id="PF02880">
    <property type="entry name" value="PGM_PMM_III"/>
    <property type="match status" value="1"/>
</dbReference>
<dbReference type="Pfam" id="PF00408">
    <property type="entry name" value="PGM_PMM_IV"/>
    <property type="match status" value="1"/>
</dbReference>
<dbReference type="PRINTS" id="PR00509">
    <property type="entry name" value="PGMPMM"/>
</dbReference>
<dbReference type="SUPFAM" id="SSF55957">
    <property type="entry name" value="Phosphoglucomutase, C-terminal domain"/>
    <property type="match status" value="1"/>
</dbReference>
<dbReference type="SUPFAM" id="SSF53738">
    <property type="entry name" value="Phosphoglucomutase, first 3 domains"/>
    <property type="match status" value="3"/>
</dbReference>
<dbReference type="PROSITE" id="PS00710">
    <property type="entry name" value="PGM_PMM"/>
    <property type="match status" value="1"/>
</dbReference>
<protein>
    <recommendedName>
        <fullName evidence="1">Phosphoglucosamine mutase</fullName>
        <ecNumber evidence="1">5.4.2.10</ecNumber>
    </recommendedName>
</protein>
<feature type="chain" id="PRO_1000087761" description="Phosphoglucosamine mutase">
    <location>
        <begin position="1"/>
        <end position="448"/>
    </location>
</feature>
<feature type="active site" description="Phosphoserine intermediate" evidence="1">
    <location>
        <position position="100"/>
    </location>
</feature>
<feature type="binding site" description="via phosphate group" evidence="1">
    <location>
        <position position="100"/>
    </location>
    <ligand>
        <name>Mg(2+)</name>
        <dbReference type="ChEBI" id="CHEBI:18420"/>
    </ligand>
</feature>
<feature type="binding site" evidence="1">
    <location>
        <position position="240"/>
    </location>
    <ligand>
        <name>Mg(2+)</name>
        <dbReference type="ChEBI" id="CHEBI:18420"/>
    </ligand>
</feature>
<feature type="binding site" evidence="1">
    <location>
        <position position="242"/>
    </location>
    <ligand>
        <name>Mg(2+)</name>
        <dbReference type="ChEBI" id="CHEBI:18420"/>
    </ligand>
</feature>
<feature type="binding site" evidence="1">
    <location>
        <position position="244"/>
    </location>
    <ligand>
        <name>Mg(2+)</name>
        <dbReference type="ChEBI" id="CHEBI:18420"/>
    </ligand>
</feature>
<feature type="modified residue" description="Phosphoserine" evidence="1">
    <location>
        <position position="100"/>
    </location>
</feature>
<reference key="1">
    <citation type="submission" date="2007-06" db="EMBL/GenBank/DDBJ databases">
        <title>Complete sequence of Clostridium beijerinckii NCIMB 8052.</title>
        <authorList>
            <consortium name="US DOE Joint Genome Institute"/>
            <person name="Copeland A."/>
            <person name="Lucas S."/>
            <person name="Lapidus A."/>
            <person name="Barry K."/>
            <person name="Detter J.C."/>
            <person name="Glavina del Rio T."/>
            <person name="Hammon N."/>
            <person name="Israni S."/>
            <person name="Dalin E."/>
            <person name="Tice H."/>
            <person name="Pitluck S."/>
            <person name="Sims D."/>
            <person name="Brettin T."/>
            <person name="Bruce D."/>
            <person name="Tapia R."/>
            <person name="Brainard J."/>
            <person name="Schmutz J."/>
            <person name="Larimer F."/>
            <person name="Land M."/>
            <person name="Hauser L."/>
            <person name="Kyrpides N."/>
            <person name="Mikhailova N."/>
            <person name="Bennet G."/>
            <person name="Cann I."/>
            <person name="Chen J.-S."/>
            <person name="Contreras A.L."/>
            <person name="Jones D."/>
            <person name="Kashket E."/>
            <person name="Mitchell W."/>
            <person name="Stoddard S."/>
            <person name="Schwarz W."/>
            <person name="Qureshi N."/>
            <person name="Young M."/>
            <person name="Shi Z."/>
            <person name="Ezeji T."/>
            <person name="White B."/>
            <person name="Blaschek H."/>
            <person name="Richardson P."/>
        </authorList>
    </citation>
    <scope>NUCLEOTIDE SEQUENCE [LARGE SCALE GENOMIC DNA]</scope>
    <source>
        <strain>ATCC 51743 / NCIMB 8052</strain>
    </source>
</reference>
<accession>A6LPX0</accession>
<proteinExistence type="inferred from homology"/>
<evidence type="ECO:0000255" key="1">
    <source>
        <dbReference type="HAMAP-Rule" id="MF_01554"/>
    </source>
</evidence>
<comment type="function">
    <text evidence="1">Catalyzes the conversion of glucosamine-6-phosphate to glucosamine-1-phosphate.</text>
</comment>
<comment type="catalytic activity">
    <reaction evidence="1">
        <text>alpha-D-glucosamine 1-phosphate = D-glucosamine 6-phosphate</text>
        <dbReference type="Rhea" id="RHEA:23424"/>
        <dbReference type="ChEBI" id="CHEBI:58516"/>
        <dbReference type="ChEBI" id="CHEBI:58725"/>
        <dbReference type="EC" id="5.4.2.10"/>
    </reaction>
</comment>
<comment type="cofactor">
    <cofactor evidence="1">
        <name>Mg(2+)</name>
        <dbReference type="ChEBI" id="CHEBI:18420"/>
    </cofactor>
    <text evidence="1">Binds 1 Mg(2+) ion per subunit.</text>
</comment>
<comment type="PTM">
    <text evidence="1">Activated by phosphorylation.</text>
</comment>
<comment type="similarity">
    <text evidence="1">Belongs to the phosphohexose mutase family.</text>
</comment>
<sequence>MGRMFGTDGVRGVANTELTARIAYDLGRAGAYVLTEGAHKPKILVAKDTRISGDMLESALIAGILSVGAEAIVLGVVPTPAVAYLTRKYGADAGVMISASHNPVEYNGIKFFNDKGYKLSDELEDEIQRVIESDFEGVPSPTGTDLGRETIEVSALDDYIEFAKNTIPYSLKGLKIALDCANGAAYKSSVKAFRELGADVFVINDNPDGTNINENCGSTHPEELMEYVIKKKCDLGFAFDGDADRCLAVDEKGNLINGDFILMLCAKYLKELGKLKDDTLVVTVMSNLGLDIACKNEKINIVKTAVGDRYVLEEMVKNKYVLGGEQSGHVIFLDYNSTGDGLVTALQIAGIVKKKEKALSELCSIMKELPQVLANATIPNDKKDLYLTDDEIQNEIRKIEEALNGVGRVLIRPSGTEPLVRVMLEGENQAEIDEMAHNLANLIEKKYN</sequence>
<gene>
    <name evidence="1" type="primary">glmM</name>
    <name type="ordered locus">Cbei_0210</name>
</gene>
<name>GLMM_CLOB8</name>
<keyword id="KW-0413">Isomerase</keyword>
<keyword id="KW-0460">Magnesium</keyword>
<keyword id="KW-0479">Metal-binding</keyword>
<keyword id="KW-0597">Phosphoprotein</keyword>